<accession>Q0VF22</accession>
<accession>Q8CG93</accession>
<name>CC138_MOUSE</name>
<protein>
    <recommendedName>
        <fullName>Coiled-coil domain-containing protein 138</fullName>
    </recommendedName>
</protein>
<proteinExistence type="evidence at protein level"/>
<feature type="chain" id="PRO_0000288456" description="Coiled-coil domain-containing protein 138">
    <location>
        <begin position="1"/>
        <end position="680"/>
    </location>
</feature>
<feature type="region of interest" description="Disordered" evidence="3">
    <location>
        <begin position="390"/>
        <end position="410"/>
    </location>
</feature>
<feature type="coiled-coil region" evidence="2">
    <location>
        <begin position="260"/>
        <end position="339"/>
    </location>
</feature>
<feature type="modified residue" description="Phosphothreonine" evidence="1">
    <location>
        <position position="63"/>
    </location>
</feature>
<feature type="modified residue" description="Phosphoserine" evidence="4">
    <location>
        <position position="64"/>
    </location>
</feature>
<feature type="modified residue" description="Phosphoserine" evidence="1">
    <location>
        <position position="484"/>
    </location>
</feature>
<dbReference type="EMBL" id="BC042726">
    <property type="protein sequence ID" value="AAH42726.1"/>
    <property type="molecule type" value="mRNA"/>
</dbReference>
<dbReference type="EMBL" id="BC119028">
    <property type="protein sequence ID" value="AAI19029.1"/>
    <property type="molecule type" value="mRNA"/>
</dbReference>
<dbReference type="EMBL" id="BC119030">
    <property type="protein sequence ID" value="AAI19031.1"/>
    <property type="molecule type" value="mRNA"/>
</dbReference>
<dbReference type="CCDS" id="CCDS48565.1"/>
<dbReference type="RefSeq" id="NP_001156428.1">
    <property type="nucleotide sequence ID" value="NM_001162956.1"/>
</dbReference>
<dbReference type="SMR" id="Q0VF22"/>
<dbReference type="BioGRID" id="217987">
    <property type="interactions" value="2"/>
</dbReference>
<dbReference type="FunCoup" id="Q0VF22">
    <property type="interactions" value="96"/>
</dbReference>
<dbReference type="STRING" id="10090.ENSMUSP00000043040"/>
<dbReference type="iPTMnet" id="Q0VF22"/>
<dbReference type="PhosphoSitePlus" id="Q0VF22"/>
<dbReference type="PaxDb" id="10090-ENSMUSP00000043040"/>
<dbReference type="ProteomicsDB" id="283707"/>
<dbReference type="Antibodypedia" id="33133">
    <property type="antibodies" value="68 antibodies from 14 providers"/>
</dbReference>
<dbReference type="Ensembl" id="ENSMUST00000036576.10">
    <property type="protein sequence ID" value="ENSMUSP00000043040.9"/>
    <property type="gene ID" value="ENSMUSG00000038010.10"/>
</dbReference>
<dbReference type="GeneID" id="76138"/>
<dbReference type="KEGG" id="mmu:76138"/>
<dbReference type="UCSC" id="uc007fdf.2">
    <property type="organism name" value="mouse"/>
</dbReference>
<dbReference type="AGR" id="MGI:1923388"/>
<dbReference type="CTD" id="165055"/>
<dbReference type="MGI" id="MGI:1923388">
    <property type="gene designation" value="Ccdc138"/>
</dbReference>
<dbReference type="VEuPathDB" id="HostDB:ENSMUSG00000038010"/>
<dbReference type="eggNOG" id="ENOG502QU8J">
    <property type="taxonomic scope" value="Eukaryota"/>
</dbReference>
<dbReference type="GeneTree" id="ENSGT00390000000217"/>
<dbReference type="HOGENOM" id="CLU_026862_0_0_1"/>
<dbReference type="InParanoid" id="Q0VF22"/>
<dbReference type="OMA" id="EWISDHH"/>
<dbReference type="OrthoDB" id="2161164at2759"/>
<dbReference type="PhylomeDB" id="Q0VF22"/>
<dbReference type="TreeFam" id="TF329029"/>
<dbReference type="BioGRID-ORCS" id="76138">
    <property type="hits" value="0 hits in 79 CRISPR screens"/>
</dbReference>
<dbReference type="ChiTaRS" id="Ccdc138">
    <property type="organism name" value="mouse"/>
</dbReference>
<dbReference type="PRO" id="PR:Q0VF22"/>
<dbReference type="Proteomes" id="UP000000589">
    <property type="component" value="Chromosome 10"/>
</dbReference>
<dbReference type="RNAct" id="Q0VF22">
    <property type="molecule type" value="protein"/>
</dbReference>
<dbReference type="Bgee" id="ENSMUSG00000038010">
    <property type="expression patterns" value="Expressed in spermatid and 81 other cell types or tissues"/>
</dbReference>
<dbReference type="Gene3D" id="1.20.5.340">
    <property type="match status" value="1"/>
</dbReference>
<dbReference type="InterPro" id="IPR038798">
    <property type="entry name" value="CCDC138"/>
</dbReference>
<dbReference type="InterPro" id="IPR048750">
    <property type="entry name" value="CCDC138_C"/>
</dbReference>
<dbReference type="InterPro" id="IPR048751">
    <property type="entry name" value="CCDC138_cc"/>
</dbReference>
<dbReference type="PANTHER" id="PTHR34523">
    <property type="entry name" value="COILED-COIL DOMAIN-CONTAINING PROTEIN 138"/>
    <property type="match status" value="1"/>
</dbReference>
<dbReference type="PANTHER" id="PTHR34523:SF1">
    <property type="entry name" value="COILED-COIL DOMAIN-CONTAINING PROTEIN 138"/>
    <property type="match status" value="1"/>
</dbReference>
<dbReference type="Pfam" id="PF21035">
    <property type="entry name" value="CCDC138_C"/>
    <property type="match status" value="1"/>
</dbReference>
<dbReference type="Pfam" id="PF21037">
    <property type="entry name" value="CCDC138_cc"/>
    <property type="match status" value="1"/>
</dbReference>
<evidence type="ECO:0000250" key="1">
    <source>
        <dbReference type="UniProtKB" id="Q96M89"/>
    </source>
</evidence>
<evidence type="ECO:0000255" key="2"/>
<evidence type="ECO:0000256" key="3">
    <source>
        <dbReference type="SAM" id="MobiDB-lite"/>
    </source>
</evidence>
<evidence type="ECO:0007744" key="4">
    <source>
    </source>
</evidence>
<reference key="1">
    <citation type="journal article" date="2004" name="Genome Res.">
        <title>The status, quality, and expansion of the NIH full-length cDNA project: the Mammalian Gene Collection (MGC).</title>
        <authorList>
            <consortium name="The MGC Project Team"/>
        </authorList>
    </citation>
    <scope>NUCLEOTIDE SEQUENCE [LARGE SCALE MRNA]</scope>
    <source>
        <strain>FVB/N</strain>
        <tissue>Brain</tissue>
        <tissue>Mammary tumor</tissue>
    </source>
</reference>
<reference key="2">
    <citation type="journal article" date="2010" name="Cell">
        <title>A tissue-specific atlas of mouse protein phosphorylation and expression.</title>
        <authorList>
            <person name="Huttlin E.L."/>
            <person name="Jedrychowski M.P."/>
            <person name="Elias J.E."/>
            <person name="Goswami T."/>
            <person name="Rad R."/>
            <person name="Beausoleil S.A."/>
            <person name="Villen J."/>
            <person name="Haas W."/>
            <person name="Sowa M.E."/>
            <person name="Gygi S.P."/>
        </authorList>
    </citation>
    <scope>PHOSPHORYLATION [LARGE SCALE ANALYSIS] AT SER-64</scope>
    <scope>IDENTIFICATION BY MASS SPECTROMETRY [LARGE SCALE ANALYSIS]</scope>
    <source>
        <tissue>Testis</tissue>
    </source>
</reference>
<gene>
    <name type="primary">Ccdc138</name>
</gene>
<organism>
    <name type="scientific">Mus musculus</name>
    <name type="common">Mouse</name>
    <dbReference type="NCBI Taxonomy" id="10090"/>
    <lineage>
        <taxon>Eukaryota</taxon>
        <taxon>Metazoa</taxon>
        <taxon>Chordata</taxon>
        <taxon>Craniata</taxon>
        <taxon>Vertebrata</taxon>
        <taxon>Euteleostomi</taxon>
        <taxon>Mammalia</taxon>
        <taxon>Eutheria</taxon>
        <taxon>Euarchontoglires</taxon>
        <taxon>Glires</taxon>
        <taxon>Rodentia</taxon>
        <taxon>Myomorpha</taxon>
        <taxon>Muroidea</taxon>
        <taxon>Muridae</taxon>
        <taxon>Murinae</taxon>
        <taxon>Mus</taxon>
        <taxon>Mus</taxon>
    </lineage>
</organism>
<keyword id="KW-0175">Coiled coil</keyword>
<keyword id="KW-0597">Phosphoprotein</keyword>
<keyword id="KW-1185">Reference proteome</keyword>
<sequence>MERRVVKPPGQDMVVERLKSRYGLAGRCPVEENDMTGVWAALMNQQHELSDFDQTKYKRRIVTSPDGLDTYSSGDKVGSSPRYYSDGRNHPTPPFCSSFKHLNVNCLDDELDSFHDLKKWETEKELMEDDHRDGASKITKQSFKEMETDALMTSMASGLETECCSGSIDSPLKQAVYPRPKVSKKQGLLPHEINQIYDELYHIHMKLQYETTAQKKFAEELQKREQFLAEREQLLFSHETALSKIKGVKEEVLTRFQILKEQHGTEIEHLTEALKEKNKENKRMRSSFDTLRELNDNLRKQLNEVSEENKKMEIQAKRVQARLDNLQRKYEFMTVQRLKGDSHAAHEVKSSKQEKAPAPKPFKAALNGQVYELLTVFMDWISDCHLSKVEPEEPGVDGGKPPAKPSQRSDIQEKCVKLLPMMTEQLQWMPLVSAKLHEPFVRFIYWSLRQLDASARQSTMASTLRRLGEDVFKGVTMKGTQDNSLEHSVENKAKTAVFFKSSSLPLRFLSTLIVLRTVTQADYLAQAFDSLCLDLKTDEGKTLFLEYQAIPVILKHLRISSKGLLSNVIDSLLQMTVESKSLQPFLEACSNSLFFRTCSVLLRTPKLDLHILEKLSIILQKLSKIKSNKKLFEVFTIHLMLQEIQRTTHPEHAFLCINLNSTLFNLGLTKCNSLVTSTSH</sequence>